<dbReference type="EMBL" id="AA027520">
    <property type="status" value="NOT_ANNOTATED_CDS"/>
    <property type="molecule type" value="mRNA"/>
</dbReference>
<dbReference type="EMBL" id="AA444750">
    <property type="status" value="NOT_ANNOTATED_CDS"/>
    <property type="molecule type" value="mRNA"/>
</dbReference>
<dbReference type="EMBL" id="AA218039">
    <property type="status" value="NOT_ANNOTATED_CDS"/>
    <property type="molecule type" value="mRNA"/>
</dbReference>
<dbReference type="EMBL" id="AF037370">
    <property type="protein sequence ID" value="AAC23485.1"/>
    <property type="molecule type" value="mRNA"/>
</dbReference>
<dbReference type="EMBL" id="BC060974">
    <property type="protein sequence ID" value="AAH60974.1"/>
    <property type="molecule type" value="mRNA"/>
</dbReference>
<dbReference type="CCDS" id="CCDS21081.1"/>
<dbReference type="RefSeq" id="NP_034074.1">
    <property type="nucleotide sequence ID" value="NM_009944.3"/>
</dbReference>
<dbReference type="SMR" id="P56392"/>
<dbReference type="BioGRID" id="198846">
    <property type="interactions" value="11"/>
</dbReference>
<dbReference type="FunCoup" id="P56392">
    <property type="interactions" value="347"/>
</dbReference>
<dbReference type="IntAct" id="P56392">
    <property type="interactions" value="1"/>
</dbReference>
<dbReference type="STRING" id="10090.ENSMUSP00000096193"/>
<dbReference type="GlyGen" id="P56392">
    <property type="glycosylation" value="1 site, 1 O-linked glycan (1 site)"/>
</dbReference>
<dbReference type="iPTMnet" id="P56392"/>
<dbReference type="PhosphoSitePlus" id="P56392"/>
<dbReference type="jPOST" id="P56392"/>
<dbReference type="PaxDb" id="10090-ENSMUSP00000096193"/>
<dbReference type="PeptideAtlas" id="P56392"/>
<dbReference type="ProteomicsDB" id="283983"/>
<dbReference type="Antibodypedia" id="44654">
    <property type="antibodies" value="98 antibodies from 22 providers"/>
</dbReference>
<dbReference type="DNASU" id="12865"/>
<dbReference type="Ensembl" id="ENSMUST00000098594.4">
    <property type="protein sequence ID" value="ENSMUSP00000096193.3"/>
    <property type="gene ID" value="ENSMUSG00000074218.4"/>
</dbReference>
<dbReference type="GeneID" id="12865"/>
<dbReference type="KEGG" id="mmu:12865"/>
<dbReference type="UCSC" id="uc009gdp.1">
    <property type="organism name" value="mouse"/>
</dbReference>
<dbReference type="AGR" id="MGI:1316714"/>
<dbReference type="CTD" id="1346"/>
<dbReference type="MGI" id="MGI:1316714">
    <property type="gene designation" value="Cox7a1"/>
</dbReference>
<dbReference type="VEuPathDB" id="HostDB:ENSMUSG00000074218"/>
<dbReference type="eggNOG" id="ENOG502SBK9">
    <property type="taxonomic scope" value="Eukaryota"/>
</dbReference>
<dbReference type="GeneTree" id="ENSGT00940000162305"/>
<dbReference type="HOGENOM" id="CLU_173437_1_0_1"/>
<dbReference type="InParanoid" id="P56392"/>
<dbReference type="PhylomeDB" id="P56392"/>
<dbReference type="TreeFam" id="TF105067"/>
<dbReference type="Reactome" id="R-MMU-5628897">
    <property type="pathway name" value="TP53 Regulates Metabolic Genes"/>
</dbReference>
<dbReference type="Reactome" id="R-MMU-611105">
    <property type="pathway name" value="Respiratory electron transport"/>
</dbReference>
<dbReference type="Reactome" id="R-MMU-9707564">
    <property type="pathway name" value="Cytoprotection by HMOX1"/>
</dbReference>
<dbReference type="Reactome" id="R-MMU-9864848">
    <property type="pathway name" value="Complex IV assembly"/>
</dbReference>
<dbReference type="UniPathway" id="UPA00705"/>
<dbReference type="BioGRID-ORCS" id="12865">
    <property type="hits" value="1 hit in 79 CRISPR screens"/>
</dbReference>
<dbReference type="ChiTaRS" id="Cox7a1">
    <property type="organism name" value="mouse"/>
</dbReference>
<dbReference type="PRO" id="PR:P56392"/>
<dbReference type="Proteomes" id="UP000000589">
    <property type="component" value="Chromosome 7"/>
</dbReference>
<dbReference type="RNAct" id="P56392">
    <property type="molecule type" value="protein"/>
</dbReference>
<dbReference type="Bgee" id="ENSMUSG00000074218">
    <property type="expression patterns" value="Expressed in myocardium of ventricle and 170 other cell types or tissues"/>
</dbReference>
<dbReference type="ExpressionAtlas" id="P56392">
    <property type="expression patterns" value="baseline and differential"/>
</dbReference>
<dbReference type="GO" id="GO:0005743">
    <property type="term" value="C:mitochondrial inner membrane"/>
    <property type="evidence" value="ECO:0000304"/>
    <property type="project" value="Reactome"/>
</dbReference>
<dbReference type="GO" id="GO:0005739">
    <property type="term" value="C:mitochondrion"/>
    <property type="evidence" value="ECO:0007005"/>
    <property type="project" value="MGI"/>
</dbReference>
<dbReference type="GO" id="GO:0045277">
    <property type="term" value="C:respiratory chain complex IV"/>
    <property type="evidence" value="ECO:0000315"/>
    <property type="project" value="UniProtKB"/>
</dbReference>
<dbReference type="GO" id="GO:0016491">
    <property type="term" value="F:oxidoreductase activity"/>
    <property type="evidence" value="ECO:0007669"/>
    <property type="project" value="UniProtKB-KW"/>
</dbReference>
<dbReference type="GO" id="GO:0006123">
    <property type="term" value="P:mitochondrial electron transport, cytochrome c to oxygen"/>
    <property type="evidence" value="ECO:0007669"/>
    <property type="project" value="InterPro"/>
</dbReference>
<dbReference type="GO" id="GO:0097250">
    <property type="term" value="P:mitochondrial respirasome assembly"/>
    <property type="evidence" value="ECO:0000250"/>
    <property type="project" value="UniProtKB"/>
</dbReference>
<dbReference type="GO" id="GO:0006119">
    <property type="term" value="P:oxidative phosphorylation"/>
    <property type="evidence" value="ECO:0000315"/>
    <property type="project" value="UniProtKB"/>
</dbReference>
<dbReference type="GO" id="GO:1902600">
    <property type="term" value="P:proton transmembrane transport"/>
    <property type="evidence" value="ECO:0007669"/>
    <property type="project" value="GOC"/>
</dbReference>
<dbReference type="CDD" id="cd00928">
    <property type="entry name" value="Cyt_c_Oxidase_VIIa"/>
    <property type="match status" value="1"/>
</dbReference>
<dbReference type="FunFam" id="4.10.91.10:FF:000001">
    <property type="entry name" value="Cytochrome c oxidase subunit 7A1, mitochondrial"/>
    <property type="match status" value="1"/>
</dbReference>
<dbReference type="Gene3D" id="4.10.91.10">
    <property type="entry name" value="Cytochrome c oxidase, subunit VIIa"/>
    <property type="match status" value="1"/>
</dbReference>
<dbReference type="InterPro" id="IPR039297">
    <property type="entry name" value="COX7a"/>
</dbReference>
<dbReference type="InterPro" id="IPR036539">
    <property type="entry name" value="Cyt_c_oxidase_su7a_sf"/>
</dbReference>
<dbReference type="InterPro" id="IPR003177">
    <property type="entry name" value="Cytc_oxidase_su7a_met"/>
</dbReference>
<dbReference type="PANTHER" id="PTHR10510">
    <property type="entry name" value="CYTOCHROME C OXIDASE POLYPEPTIDE 7A"/>
    <property type="match status" value="1"/>
</dbReference>
<dbReference type="PANTHER" id="PTHR10510:SF5">
    <property type="entry name" value="CYTOCHROME C OXIDASE SUBUNIT 7A1, MITOCHONDRIAL"/>
    <property type="match status" value="1"/>
</dbReference>
<dbReference type="Pfam" id="PF02238">
    <property type="entry name" value="COX7a"/>
    <property type="match status" value="1"/>
</dbReference>
<dbReference type="SUPFAM" id="SSF81419">
    <property type="entry name" value="Mitochondrial cytochrome c oxidase subunit VIIa"/>
    <property type="match status" value="1"/>
</dbReference>
<comment type="function">
    <text evidence="2 3 4 5 6">Component of the mitochondrial respiratory complex IV (CIV, also named cytochrome c oxidase complex), the last enzyme in the mitochondrial electron transport chain which drives oxidative phosphorylation (PubMed:22119795, PubMed:22869013). The CIV complex is the component of the respiratory chain that catalyzes the reduction of oxygen to water (By similarity). Acts as an assembly factor that specifically drives the homodimerization of CIV complexes, mediating the formation of mitochondrial respiratory supercomplexes (respirasomes) containing two CIV: supercomplxes with two molecules of CIV show improved activity (By similarity). Despite being highly expressed in brown adipose tissue, not required for thermogenesis (PubMed:26635001).</text>
</comment>
<comment type="pathway">
    <text evidence="4 5">Energy metabolism; oxidative phosphorylation.</text>
</comment>
<comment type="subunit">
    <text evidence="1 3">Component of the complex IV (CIV, cytochrome c oxidase), a multisubunit enzyme composed of 14 subunits (By similarity). The complex is composed of a catalytic core of 3 subunits MT-CO1, MT-CO2 and MT-CO3, encoded in the mitochondrial DNA, and 11 supernumerary subunits COX4I, COX5A, COX5B, COX6A, COX6B, COX6C, COX7A, COX7B, COX7C, COX8 and NDUFA4, which are encoded in the nuclear genome (By similarity). The complex exists as a monomer or a dimer and forms supercomplexes (SCs) in the inner mitochondrial membrane with NADH-ubiquinone oxidoreductase (complex I, CI) and ubiquinol-cytochrome c oxidoreductase (cytochrome b-c1 complex, complex III, CIII), resulting in different assemblies (supercomplex SCI(1)III(2)IV(1) and megacomplex MCI(2)III(2)IV(2)) (By similarity).</text>
</comment>
<comment type="subcellular location">
    <subcellularLocation>
        <location evidence="1">Mitochondrion inner membrane</location>
        <topology evidence="1">Single-pass membrane protein</topology>
    </subcellularLocation>
</comment>
<comment type="induction">
    <text evidence="6">Induced in brown adipose tissue in response to cold.</text>
</comment>
<comment type="disruption phenotype">
    <text evidence="4 5">Mice are viable but show reduced cytochrome c oxidase activity and develop dilated cardiomyopathy and impaired skeletal muscle function (PubMed:22119795, PubMed:22869013). The cardiac myopathy appears at 6 weeks of age; it however improves and stabilizes by 6 months of age, due to incorporation of Cox7a2 paralog into the cardiac cytochrome c oxidase holoenzyme (PubMed:22119795). Defects in skeletal muscles are characterized by reduced muscle bioenergetics and hindlimb capillarity (PubMed:22869013).</text>
</comment>
<comment type="similarity">
    <text evidence="9">Belongs to the cytochrome c oxidase VIIa family.</text>
</comment>
<sequence>MRALRVSQALVRSFSSSTRSHLENRVAEKQKLFQADNDLPVHLKGGGMDNVLYRLTMTLTLGGTAYCLYCLGWASFPHKK</sequence>
<evidence type="ECO:0000250" key="1">
    <source>
        <dbReference type="UniProtKB" id="P07470"/>
    </source>
</evidence>
<evidence type="ECO:0000250" key="2">
    <source>
        <dbReference type="UniProtKB" id="P10174"/>
    </source>
</evidence>
<evidence type="ECO:0000250" key="3">
    <source>
        <dbReference type="UniProtKB" id="Q08CE7"/>
    </source>
</evidence>
<evidence type="ECO:0000269" key="4">
    <source>
    </source>
</evidence>
<evidence type="ECO:0000269" key="5">
    <source>
    </source>
</evidence>
<evidence type="ECO:0000269" key="6">
    <source>
    </source>
</evidence>
<evidence type="ECO:0000303" key="7">
    <source>
    </source>
</evidence>
<evidence type="ECO:0000303" key="8">
    <source>
    </source>
</evidence>
<evidence type="ECO:0000305" key="9"/>
<evidence type="ECO:0000312" key="10">
    <source>
        <dbReference type="MGI" id="MGI:1316714"/>
    </source>
</evidence>
<feature type="transit peptide" description="Mitochondrion" evidence="1">
    <location>
        <begin position="1"/>
        <end position="21"/>
    </location>
</feature>
<feature type="chain" id="PRO_0000006150" description="Cytochrome c oxidase subunit 7A1, mitochondrial">
    <location>
        <begin position="22"/>
        <end position="80"/>
    </location>
</feature>
<feature type="topological domain" description="Mitochondrial matrix" evidence="1">
    <location>
        <begin position="22"/>
        <end position="46"/>
    </location>
</feature>
<feature type="transmembrane region" description="Helical" evidence="1">
    <location>
        <begin position="47"/>
        <end position="75"/>
    </location>
</feature>
<feature type="topological domain" description="Mitochondrial intermembrane" evidence="1">
    <location>
        <begin position="76"/>
        <end position="80"/>
    </location>
</feature>
<gene>
    <name evidence="8 10" type="primary">Cox7a1</name>
    <name type="synonym">Cox7a</name>
    <name type="synonym">Cox7ah</name>
</gene>
<name>CX7A1_MOUSE</name>
<organism>
    <name type="scientific">Mus musculus</name>
    <name type="common">Mouse</name>
    <dbReference type="NCBI Taxonomy" id="10090"/>
    <lineage>
        <taxon>Eukaryota</taxon>
        <taxon>Metazoa</taxon>
        <taxon>Chordata</taxon>
        <taxon>Craniata</taxon>
        <taxon>Vertebrata</taxon>
        <taxon>Euteleostomi</taxon>
        <taxon>Mammalia</taxon>
        <taxon>Eutheria</taxon>
        <taxon>Euarchontoglires</taxon>
        <taxon>Glires</taxon>
        <taxon>Rodentia</taxon>
        <taxon>Myomorpha</taxon>
        <taxon>Muroidea</taxon>
        <taxon>Muridae</taxon>
        <taxon>Murinae</taxon>
        <taxon>Mus</taxon>
        <taxon>Mus</taxon>
    </lineage>
</organism>
<accession>P56392</accession>
<keyword id="KW-0472">Membrane</keyword>
<keyword id="KW-0496">Mitochondrion</keyword>
<keyword id="KW-0999">Mitochondrion inner membrane</keyword>
<keyword id="KW-0560">Oxidoreductase</keyword>
<keyword id="KW-1185">Reference proteome</keyword>
<keyword id="KW-0809">Transit peptide</keyword>
<keyword id="KW-0812">Transmembrane</keyword>
<keyword id="KW-1133">Transmembrane helix</keyword>
<reference key="1">
    <citation type="submission" date="1996-09" db="EMBL/GenBank/DDBJ databases">
        <authorList>
            <person name="Marra M."/>
            <person name="Hillier L."/>
            <person name="Allen M."/>
            <person name="Bowles M."/>
            <person name="Dietrich N."/>
            <person name="Dubuque T."/>
            <person name="Geisel S."/>
            <person name="Kucaba T."/>
            <person name="Lacy M."/>
            <person name="Le M."/>
            <person name="Martin J."/>
            <person name="Morris M."/>
            <person name="Schellenberg K."/>
            <person name="Steptoe M."/>
            <person name="Tan F."/>
            <person name="Underwood K."/>
            <person name="Moore B."/>
            <person name="Theising B."/>
            <person name="Wylie T."/>
            <person name="Lennon G."/>
            <person name="Soares B."/>
            <person name="Wilson R."/>
            <person name="Waterston R."/>
        </authorList>
    </citation>
    <scope>NUCLEOTIDE SEQUENCE [MRNA]</scope>
</reference>
<reference key="2">
    <citation type="journal article" date="1998" name="Genomics">
        <title>Tissue-specific expression and mapping of the Cox7ah gene in mouse.</title>
        <authorList>
            <person name="Jaradat S.A."/>
            <person name="Ko M.S."/>
            <person name="Grossman L.I."/>
        </authorList>
    </citation>
    <scope>NUCLEOTIDE SEQUENCE [MRNA]</scope>
</reference>
<reference key="3">
    <citation type="journal article" date="2004" name="Genome Res.">
        <title>The status, quality, and expansion of the NIH full-length cDNA project: the Mammalian Gene Collection (MGC).</title>
        <authorList>
            <consortium name="The MGC Project Team"/>
        </authorList>
    </citation>
    <scope>NUCLEOTIDE SEQUENCE [LARGE SCALE MRNA]</scope>
    <source>
        <tissue>Brain</tissue>
    </source>
</reference>
<reference key="4">
    <citation type="journal article" date="2010" name="Cell">
        <title>A tissue-specific atlas of mouse protein phosphorylation and expression.</title>
        <authorList>
            <person name="Huttlin E.L."/>
            <person name="Jedrychowski M.P."/>
            <person name="Elias J.E."/>
            <person name="Goswami T."/>
            <person name="Rad R."/>
            <person name="Beausoleil S.A."/>
            <person name="Villen J."/>
            <person name="Haas W."/>
            <person name="Sowa M.E."/>
            <person name="Gygi S.P."/>
        </authorList>
    </citation>
    <scope>IDENTIFICATION BY MASS SPECTROMETRY [LARGE SCALE ANALYSIS]</scope>
    <source>
        <tissue>Brown adipose tissue</tissue>
        <tissue>Heart</tissue>
        <tissue>Kidney</tissue>
        <tissue>Lung</tissue>
        <tissue>Testis</tissue>
    </source>
</reference>
<reference key="5">
    <citation type="journal article" date="2012" name="J. Physiol. (Lond.)">
        <title>Deletion of heart-type cytochrome c oxidase subunit 7a1 impairs skeletal muscle angiogenesis and oxidative phosphorylation.</title>
        <authorList>
            <person name="Lee I."/>
            <person name="Huettemann M."/>
            <person name="Liu J."/>
            <person name="Grossman L.I."/>
            <person name="Malek M.H."/>
        </authorList>
    </citation>
    <scope>FUNCTION</scope>
    <scope>PATHWAY</scope>
    <scope>DISRUPTION PHENOTYPE</scope>
</reference>
<reference key="6">
    <citation type="journal article" date="2012" name="Mitochondrion">
        <title>Mice deleted for heart-type cytochrome c oxidase subunit 7a1 develop dilated cardiomyopathy.</title>
        <authorList>
            <person name="Huettemann M."/>
            <person name="Klewer S."/>
            <person name="Lee I."/>
            <person name="Pecinova A."/>
            <person name="Pecina P."/>
            <person name="Liu J."/>
            <person name="Lee M."/>
            <person name="Doan J.W."/>
            <person name="Larson D."/>
            <person name="Slack E."/>
            <person name="Maghsoodi B."/>
            <person name="Erickson R.P."/>
            <person name="Grossman L.I."/>
        </authorList>
    </citation>
    <scope>FUNCTION</scope>
    <scope>PATHWAY</scope>
    <scope>DISRUPTION PHENOTYPE</scope>
</reference>
<reference key="7">
    <citation type="journal article" date="2015" name="Sci. Rep.">
        <title>The brown and brite adipocyte marker Cox7a1 is not required for non-shivering thermogenesis in mice.</title>
        <authorList>
            <person name="Maurer S.F."/>
            <person name="Fromme T."/>
            <person name="Grossman L.I."/>
            <person name="Huettemann M."/>
            <person name="Klingenspor M."/>
        </authorList>
    </citation>
    <scope>FUNCTION</scope>
    <scope>INDUCTION</scope>
</reference>
<proteinExistence type="evidence at protein level"/>
<protein>
    <recommendedName>
        <fullName evidence="7">Cytochrome c oxidase subunit 7A1, mitochondrial</fullName>
    </recommendedName>
    <alternativeName>
        <fullName>Cytochrome c oxidase subunit VIIa-heart</fullName>
        <shortName>Cytochrome c oxidase subunit VIIa-H</shortName>
    </alternativeName>
    <alternativeName>
        <fullName>Cytochrome c oxidase subunit VIIa-muscle</fullName>
        <shortName>Cytochrome c oxidase subunit VIIa-M</shortName>
    </alternativeName>
</protein>